<keyword id="KW-0067">ATP-binding</keyword>
<keyword id="KW-0963">Cytoplasm</keyword>
<keyword id="KW-0460">Magnesium</keyword>
<keyword id="KW-0479">Metal-binding</keyword>
<keyword id="KW-0547">Nucleotide-binding</keyword>
<keyword id="KW-0554">One-carbon metabolism</keyword>
<keyword id="KW-0630">Potassium</keyword>
<keyword id="KW-1185">Reference proteome</keyword>
<keyword id="KW-0808">Transferase</keyword>
<dbReference type="EC" id="2.5.1.6" evidence="1"/>
<dbReference type="EMBL" id="CU468135">
    <property type="protein sequence ID" value="CAO97872.1"/>
    <property type="molecule type" value="Genomic_DNA"/>
</dbReference>
<dbReference type="RefSeq" id="WP_012442529.1">
    <property type="nucleotide sequence ID" value="NC_010694.1"/>
</dbReference>
<dbReference type="SMR" id="B2VF06"/>
<dbReference type="STRING" id="465817.ETA_28260"/>
<dbReference type="KEGG" id="eta:ETA_28260"/>
<dbReference type="eggNOG" id="COG0192">
    <property type="taxonomic scope" value="Bacteria"/>
</dbReference>
<dbReference type="HOGENOM" id="CLU_041802_1_1_6"/>
<dbReference type="OrthoDB" id="9801686at2"/>
<dbReference type="UniPathway" id="UPA00315">
    <property type="reaction ID" value="UER00080"/>
</dbReference>
<dbReference type="Proteomes" id="UP000001726">
    <property type="component" value="Chromosome"/>
</dbReference>
<dbReference type="GO" id="GO:0005737">
    <property type="term" value="C:cytoplasm"/>
    <property type="evidence" value="ECO:0007669"/>
    <property type="project" value="UniProtKB-SubCell"/>
</dbReference>
<dbReference type="GO" id="GO:0005524">
    <property type="term" value="F:ATP binding"/>
    <property type="evidence" value="ECO:0007669"/>
    <property type="project" value="UniProtKB-UniRule"/>
</dbReference>
<dbReference type="GO" id="GO:0000287">
    <property type="term" value="F:magnesium ion binding"/>
    <property type="evidence" value="ECO:0007669"/>
    <property type="project" value="UniProtKB-UniRule"/>
</dbReference>
<dbReference type="GO" id="GO:0004478">
    <property type="term" value="F:methionine adenosyltransferase activity"/>
    <property type="evidence" value="ECO:0007669"/>
    <property type="project" value="UniProtKB-UniRule"/>
</dbReference>
<dbReference type="GO" id="GO:0006730">
    <property type="term" value="P:one-carbon metabolic process"/>
    <property type="evidence" value="ECO:0007669"/>
    <property type="project" value="UniProtKB-KW"/>
</dbReference>
<dbReference type="GO" id="GO:0006556">
    <property type="term" value="P:S-adenosylmethionine biosynthetic process"/>
    <property type="evidence" value="ECO:0007669"/>
    <property type="project" value="UniProtKB-UniRule"/>
</dbReference>
<dbReference type="CDD" id="cd18079">
    <property type="entry name" value="S-AdoMet_synt"/>
    <property type="match status" value="1"/>
</dbReference>
<dbReference type="FunFam" id="3.30.300.10:FF:000001">
    <property type="entry name" value="S-adenosylmethionine synthase"/>
    <property type="match status" value="1"/>
</dbReference>
<dbReference type="FunFam" id="3.30.300.10:FF:000003">
    <property type="entry name" value="S-adenosylmethionine synthase"/>
    <property type="match status" value="1"/>
</dbReference>
<dbReference type="Gene3D" id="3.30.300.10">
    <property type="match status" value="3"/>
</dbReference>
<dbReference type="HAMAP" id="MF_00086">
    <property type="entry name" value="S_AdoMet_synth1"/>
    <property type="match status" value="1"/>
</dbReference>
<dbReference type="InterPro" id="IPR022631">
    <property type="entry name" value="ADOMET_SYNTHASE_CS"/>
</dbReference>
<dbReference type="InterPro" id="IPR022630">
    <property type="entry name" value="S-AdoMet_synt_C"/>
</dbReference>
<dbReference type="InterPro" id="IPR022629">
    <property type="entry name" value="S-AdoMet_synt_central"/>
</dbReference>
<dbReference type="InterPro" id="IPR022628">
    <property type="entry name" value="S-AdoMet_synt_N"/>
</dbReference>
<dbReference type="InterPro" id="IPR002133">
    <property type="entry name" value="S-AdoMet_synthetase"/>
</dbReference>
<dbReference type="InterPro" id="IPR022636">
    <property type="entry name" value="S-AdoMet_synthetase_sfam"/>
</dbReference>
<dbReference type="NCBIfam" id="TIGR01034">
    <property type="entry name" value="metK"/>
    <property type="match status" value="1"/>
</dbReference>
<dbReference type="PANTHER" id="PTHR11964">
    <property type="entry name" value="S-ADENOSYLMETHIONINE SYNTHETASE"/>
    <property type="match status" value="1"/>
</dbReference>
<dbReference type="Pfam" id="PF02773">
    <property type="entry name" value="S-AdoMet_synt_C"/>
    <property type="match status" value="1"/>
</dbReference>
<dbReference type="Pfam" id="PF02772">
    <property type="entry name" value="S-AdoMet_synt_M"/>
    <property type="match status" value="1"/>
</dbReference>
<dbReference type="Pfam" id="PF00438">
    <property type="entry name" value="S-AdoMet_synt_N"/>
    <property type="match status" value="1"/>
</dbReference>
<dbReference type="PIRSF" id="PIRSF000497">
    <property type="entry name" value="MAT"/>
    <property type="match status" value="1"/>
</dbReference>
<dbReference type="SUPFAM" id="SSF55973">
    <property type="entry name" value="S-adenosylmethionine synthetase"/>
    <property type="match status" value="3"/>
</dbReference>
<dbReference type="PROSITE" id="PS00376">
    <property type="entry name" value="ADOMET_SYNTHASE_1"/>
    <property type="match status" value="1"/>
</dbReference>
<dbReference type="PROSITE" id="PS00377">
    <property type="entry name" value="ADOMET_SYNTHASE_2"/>
    <property type="match status" value="1"/>
</dbReference>
<evidence type="ECO:0000255" key="1">
    <source>
        <dbReference type="HAMAP-Rule" id="MF_00086"/>
    </source>
</evidence>
<sequence>MAKHLFTSESVSEGHPDKIADQISDAVLDAILEQDPKARVACETYVKTGMVLVGGEITTSAWVDIEEITRQTVRDIGYVHSDMGFDANSCAVLSAIGKQSPDINQGVDRTDPLEQGAGDQGLMFGYATNETDVLMPAPVTYAHRLVQRQSEVRKSGALPWLRPDAKSQITFQYDDGKIVGIDAVVLSTQHAEDISQKELQEAVMEEIIKPVLPTEWINASTKYHINPTGRFVIGGPMGDCGLTGRKIIVDTYGGMARHGGGAFSGKDPSKVDRSAAYAARYVAKNIVAAGLADRCEIQVSYAIGVAEPTSIMVETFGTEKISTETLTLLVREFFDLRPHGLIQMLDLLHPIYRETAAYGHFGREHFPWEKTDKAAQLREAAGLK</sequence>
<feature type="chain" id="PRO_1000093049" description="S-adenosylmethionine synthase">
    <location>
        <begin position="1"/>
        <end position="384"/>
    </location>
</feature>
<feature type="region of interest" description="Flexible loop" evidence="1">
    <location>
        <begin position="99"/>
        <end position="109"/>
    </location>
</feature>
<feature type="binding site" description="in other chain" evidence="1">
    <location>
        <position position="15"/>
    </location>
    <ligand>
        <name>ATP</name>
        <dbReference type="ChEBI" id="CHEBI:30616"/>
        <note>ligand shared between two neighboring subunits</note>
    </ligand>
</feature>
<feature type="binding site" evidence="1">
    <location>
        <position position="17"/>
    </location>
    <ligand>
        <name>Mg(2+)</name>
        <dbReference type="ChEBI" id="CHEBI:18420"/>
    </ligand>
</feature>
<feature type="binding site" evidence="1">
    <location>
        <position position="43"/>
    </location>
    <ligand>
        <name>K(+)</name>
        <dbReference type="ChEBI" id="CHEBI:29103"/>
    </ligand>
</feature>
<feature type="binding site" description="in other chain" evidence="1">
    <location>
        <position position="56"/>
    </location>
    <ligand>
        <name>L-methionine</name>
        <dbReference type="ChEBI" id="CHEBI:57844"/>
        <note>ligand shared between two neighboring subunits</note>
    </ligand>
</feature>
<feature type="binding site" description="in other chain" evidence="1">
    <location>
        <position position="99"/>
    </location>
    <ligand>
        <name>L-methionine</name>
        <dbReference type="ChEBI" id="CHEBI:57844"/>
        <note>ligand shared between two neighboring subunits</note>
    </ligand>
</feature>
<feature type="binding site" description="in other chain" evidence="1">
    <location>
        <begin position="164"/>
        <end position="166"/>
    </location>
    <ligand>
        <name>ATP</name>
        <dbReference type="ChEBI" id="CHEBI:30616"/>
        <note>ligand shared between two neighboring subunits</note>
    </ligand>
</feature>
<feature type="binding site" description="in other chain" evidence="1">
    <location>
        <begin position="230"/>
        <end position="231"/>
    </location>
    <ligand>
        <name>ATP</name>
        <dbReference type="ChEBI" id="CHEBI:30616"/>
        <note>ligand shared between two neighboring subunits</note>
    </ligand>
</feature>
<feature type="binding site" evidence="1">
    <location>
        <position position="239"/>
    </location>
    <ligand>
        <name>ATP</name>
        <dbReference type="ChEBI" id="CHEBI:30616"/>
        <note>ligand shared between two neighboring subunits</note>
    </ligand>
</feature>
<feature type="binding site" evidence="1">
    <location>
        <position position="239"/>
    </location>
    <ligand>
        <name>L-methionine</name>
        <dbReference type="ChEBI" id="CHEBI:57844"/>
        <note>ligand shared between two neighboring subunits</note>
    </ligand>
</feature>
<feature type="binding site" description="in other chain" evidence="1">
    <location>
        <begin position="245"/>
        <end position="246"/>
    </location>
    <ligand>
        <name>ATP</name>
        <dbReference type="ChEBI" id="CHEBI:30616"/>
        <note>ligand shared between two neighboring subunits</note>
    </ligand>
</feature>
<feature type="binding site" evidence="1">
    <location>
        <position position="262"/>
    </location>
    <ligand>
        <name>ATP</name>
        <dbReference type="ChEBI" id="CHEBI:30616"/>
        <note>ligand shared between two neighboring subunits</note>
    </ligand>
</feature>
<feature type="binding site" evidence="1">
    <location>
        <position position="266"/>
    </location>
    <ligand>
        <name>ATP</name>
        <dbReference type="ChEBI" id="CHEBI:30616"/>
        <note>ligand shared between two neighboring subunits</note>
    </ligand>
</feature>
<feature type="binding site" description="in other chain" evidence="1">
    <location>
        <position position="270"/>
    </location>
    <ligand>
        <name>L-methionine</name>
        <dbReference type="ChEBI" id="CHEBI:57844"/>
        <note>ligand shared between two neighboring subunits</note>
    </ligand>
</feature>
<comment type="function">
    <text evidence="1">Catalyzes the formation of S-adenosylmethionine (AdoMet) from methionine and ATP. The overall synthetic reaction is composed of two sequential steps, AdoMet formation and the subsequent tripolyphosphate hydrolysis which occurs prior to release of AdoMet from the enzyme.</text>
</comment>
<comment type="catalytic activity">
    <reaction evidence="1">
        <text>L-methionine + ATP + H2O = S-adenosyl-L-methionine + phosphate + diphosphate</text>
        <dbReference type="Rhea" id="RHEA:21080"/>
        <dbReference type="ChEBI" id="CHEBI:15377"/>
        <dbReference type="ChEBI" id="CHEBI:30616"/>
        <dbReference type="ChEBI" id="CHEBI:33019"/>
        <dbReference type="ChEBI" id="CHEBI:43474"/>
        <dbReference type="ChEBI" id="CHEBI:57844"/>
        <dbReference type="ChEBI" id="CHEBI:59789"/>
        <dbReference type="EC" id="2.5.1.6"/>
    </reaction>
</comment>
<comment type="cofactor">
    <cofactor evidence="1">
        <name>Mg(2+)</name>
        <dbReference type="ChEBI" id="CHEBI:18420"/>
    </cofactor>
    <text evidence="1">Binds 2 divalent ions per subunit.</text>
</comment>
<comment type="cofactor">
    <cofactor evidence="1">
        <name>K(+)</name>
        <dbReference type="ChEBI" id="CHEBI:29103"/>
    </cofactor>
    <text evidence="1">Binds 1 potassium ion per subunit.</text>
</comment>
<comment type="pathway">
    <text evidence="1">Amino-acid biosynthesis; S-adenosyl-L-methionine biosynthesis; S-adenosyl-L-methionine from L-methionine: step 1/1.</text>
</comment>
<comment type="subunit">
    <text evidence="1">Homotetramer; dimer of dimers.</text>
</comment>
<comment type="subcellular location">
    <subcellularLocation>
        <location evidence="1">Cytoplasm</location>
    </subcellularLocation>
</comment>
<comment type="similarity">
    <text evidence="1">Belongs to the AdoMet synthase family.</text>
</comment>
<accession>B2VF06</accession>
<protein>
    <recommendedName>
        <fullName evidence="1">S-adenosylmethionine synthase</fullName>
        <shortName evidence="1">AdoMet synthase</shortName>
        <ecNumber evidence="1">2.5.1.6</ecNumber>
    </recommendedName>
    <alternativeName>
        <fullName evidence="1">MAT</fullName>
    </alternativeName>
    <alternativeName>
        <fullName evidence="1">Methionine adenosyltransferase</fullName>
    </alternativeName>
</protein>
<reference key="1">
    <citation type="journal article" date="2008" name="Environ. Microbiol.">
        <title>The genome of Erwinia tasmaniensis strain Et1/99, a non-pathogenic bacterium in the genus Erwinia.</title>
        <authorList>
            <person name="Kube M."/>
            <person name="Migdoll A.M."/>
            <person name="Mueller I."/>
            <person name="Kuhl H."/>
            <person name="Beck A."/>
            <person name="Reinhardt R."/>
            <person name="Geider K."/>
        </authorList>
    </citation>
    <scope>NUCLEOTIDE SEQUENCE [LARGE SCALE GENOMIC DNA]</scope>
    <source>
        <strain>DSM 17950 / CFBP 7177 / CIP 109463 / NCPPB 4357 / Et1/99</strain>
    </source>
</reference>
<organism>
    <name type="scientific">Erwinia tasmaniensis (strain DSM 17950 / CFBP 7177 / CIP 109463 / NCPPB 4357 / Et1/99)</name>
    <dbReference type="NCBI Taxonomy" id="465817"/>
    <lineage>
        <taxon>Bacteria</taxon>
        <taxon>Pseudomonadati</taxon>
        <taxon>Pseudomonadota</taxon>
        <taxon>Gammaproteobacteria</taxon>
        <taxon>Enterobacterales</taxon>
        <taxon>Erwiniaceae</taxon>
        <taxon>Erwinia</taxon>
    </lineage>
</organism>
<proteinExistence type="inferred from homology"/>
<name>METK_ERWT9</name>
<gene>
    <name evidence="1" type="primary">metK</name>
    <name type="ordered locus">ETA_28260</name>
</gene>